<reference key="1">
    <citation type="journal article" date="2002" name="Proc. Natl. Acad. Sci. U.S.A.">
        <title>Complete genome sequence and comparative genomic analysis of an emerging human pathogen, serotype V Streptococcus agalactiae.</title>
        <authorList>
            <person name="Tettelin H."/>
            <person name="Masignani V."/>
            <person name="Cieslewicz M.J."/>
            <person name="Eisen J.A."/>
            <person name="Peterson S.N."/>
            <person name="Wessels M.R."/>
            <person name="Paulsen I.T."/>
            <person name="Nelson K.E."/>
            <person name="Margarit I."/>
            <person name="Read T.D."/>
            <person name="Madoff L.C."/>
            <person name="Wolf A.M."/>
            <person name="Beanan M.J."/>
            <person name="Brinkac L.M."/>
            <person name="Daugherty S.C."/>
            <person name="DeBoy R.T."/>
            <person name="Durkin A.S."/>
            <person name="Kolonay J.F."/>
            <person name="Madupu R."/>
            <person name="Lewis M.R."/>
            <person name="Radune D."/>
            <person name="Fedorova N.B."/>
            <person name="Scanlan D."/>
            <person name="Khouri H.M."/>
            <person name="Mulligan S."/>
            <person name="Carty H.A."/>
            <person name="Cline R.T."/>
            <person name="Van Aken S.E."/>
            <person name="Gill J."/>
            <person name="Scarselli M."/>
            <person name="Mora M."/>
            <person name="Iacobini E.T."/>
            <person name="Brettoni C."/>
            <person name="Galli G."/>
            <person name="Mariani M."/>
            <person name="Vegni F."/>
            <person name="Maione D."/>
            <person name="Rinaudo D."/>
            <person name="Rappuoli R."/>
            <person name="Telford J.L."/>
            <person name="Kasper D.L."/>
            <person name="Grandi G."/>
            <person name="Fraser C.M."/>
        </authorList>
    </citation>
    <scope>NUCLEOTIDE SEQUENCE [LARGE SCALE GENOMIC DNA]</scope>
    <source>
        <strain>ATCC BAA-611 / 2603 V/R</strain>
    </source>
</reference>
<feature type="chain" id="PRO_0000177234" description="Large ribosomal subunit protein bL20">
    <location>
        <begin position="1"/>
        <end position="119"/>
    </location>
</feature>
<dbReference type="EMBL" id="AE009948">
    <property type="protein sequence ID" value="AAN00253.1"/>
    <property type="molecule type" value="Genomic_DNA"/>
</dbReference>
<dbReference type="RefSeq" id="NP_688380.1">
    <property type="nucleotide sequence ID" value="NC_004116.1"/>
</dbReference>
<dbReference type="RefSeq" id="WP_000124839.1">
    <property type="nucleotide sequence ID" value="NC_004116.1"/>
</dbReference>
<dbReference type="SMR" id="P66111"/>
<dbReference type="STRING" id="208435.SAG1382"/>
<dbReference type="GeneID" id="98392912"/>
<dbReference type="KEGG" id="sag:SAG1382"/>
<dbReference type="PATRIC" id="fig|208435.3.peg.1390"/>
<dbReference type="HOGENOM" id="CLU_123265_0_1_9"/>
<dbReference type="OrthoDB" id="9808966at2"/>
<dbReference type="PRO" id="PR:P66111"/>
<dbReference type="Proteomes" id="UP000000821">
    <property type="component" value="Chromosome"/>
</dbReference>
<dbReference type="GO" id="GO:1990904">
    <property type="term" value="C:ribonucleoprotein complex"/>
    <property type="evidence" value="ECO:0007669"/>
    <property type="project" value="UniProtKB-KW"/>
</dbReference>
<dbReference type="GO" id="GO:0005840">
    <property type="term" value="C:ribosome"/>
    <property type="evidence" value="ECO:0007669"/>
    <property type="project" value="UniProtKB-KW"/>
</dbReference>
<dbReference type="GO" id="GO:0019843">
    <property type="term" value="F:rRNA binding"/>
    <property type="evidence" value="ECO:0007669"/>
    <property type="project" value="UniProtKB-UniRule"/>
</dbReference>
<dbReference type="GO" id="GO:0003735">
    <property type="term" value="F:structural constituent of ribosome"/>
    <property type="evidence" value="ECO:0007669"/>
    <property type="project" value="InterPro"/>
</dbReference>
<dbReference type="GO" id="GO:0000027">
    <property type="term" value="P:ribosomal large subunit assembly"/>
    <property type="evidence" value="ECO:0007669"/>
    <property type="project" value="UniProtKB-UniRule"/>
</dbReference>
<dbReference type="GO" id="GO:0006412">
    <property type="term" value="P:translation"/>
    <property type="evidence" value="ECO:0007669"/>
    <property type="project" value="InterPro"/>
</dbReference>
<dbReference type="CDD" id="cd07026">
    <property type="entry name" value="Ribosomal_L20"/>
    <property type="match status" value="1"/>
</dbReference>
<dbReference type="FunFam" id="1.10.1900.20:FF:000001">
    <property type="entry name" value="50S ribosomal protein L20"/>
    <property type="match status" value="1"/>
</dbReference>
<dbReference type="Gene3D" id="6.10.160.10">
    <property type="match status" value="1"/>
</dbReference>
<dbReference type="Gene3D" id="1.10.1900.20">
    <property type="entry name" value="Ribosomal protein L20"/>
    <property type="match status" value="1"/>
</dbReference>
<dbReference type="HAMAP" id="MF_00382">
    <property type="entry name" value="Ribosomal_bL20"/>
    <property type="match status" value="1"/>
</dbReference>
<dbReference type="InterPro" id="IPR005813">
    <property type="entry name" value="Ribosomal_bL20"/>
</dbReference>
<dbReference type="InterPro" id="IPR049946">
    <property type="entry name" value="RIBOSOMAL_L20_CS"/>
</dbReference>
<dbReference type="InterPro" id="IPR035566">
    <property type="entry name" value="Ribosomal_protein_bL20_C"/>
</dbReference>
<dbReference type="NCBIfam" id="TIGR01032">
    <property type="entry name" value="rplT_bact"/>
    <property type="match status" value="1"/>
</dbReference>
<dbReference type="PANTHER" id="PTHR10986">
    <property type="entry name" value="39S RIBOSOMAL PROTEIN L20"/>
    <property type="match status" value="1"/>
</dbReference>
<dbReference type="Pfam" id="PF00453">
    <property type="entry name" value="Ribosomal_L20"/>
    <property type="match status" value="1"/>
</dbReference>
<dbReference type="PRINTS" id="PR00062">
    <property type="entry name" value="RIBOSOMALL20"/>
</dbReference>
<dbReference type="SUPFAM" id="SSF74731">
    <property type="entry name" value="Ribosomal protein L20"/>
    <property type="match status" value="1"/>
</dbReference>
<dbReference type="PROSITE" id="PS00937">
    <property type="entry name" value="RIBOSOMAL_L20"/>
    <property type="match status" value="1"/>
</dbReference>
<sequence>MARVKGGVVSRKRRKRVLKLAKGYYGAKHILFRTAKEQVMNSYYYAYRDRRQKKRDFRKLWITRINAAARMNGLSYSQLMHGLKLAEIEVNRKMLADLAVNDAAAFTALADAAKAKLGK</sequence>
<protein>
    <recommendedName>
        <fullName evidence="1">Large ribosomal subunit protein bL20</fullName>
    </recommendedName>
    <alternativeName>
        <fullName evidence="2">50S ribosomal protein L20</fullName>
    </alternativeName>
</protein>
<proteinExistence type="inferred from homology"/>
<organism>
    <name type="scientific">Streptococcus agalactiae serotype V (strain ATCC BAA-611 / 2603 V/R)</name>
    <dbReference type="NCBI Taxonomy" id="208435"/>
    <lineage>
        <taxon>Bacteria</taxon>
        <taxon>Bacillati</taxon>
        <taxon>Bacillota</taxon>
        <taxon>Bacilli</taxon>
        <taxon>Lactobacillales</taxon>
        <taxon>Streptococcaceae</taxon>
        <taxon>Streptococcus</taxon>
    </lineage>
</organism>
<evidence type="ECO:0000255" key="1">
    <source>
        <dbReference type="HAMAP-Rule" id="MF_00382"/>
    </source>
</evidence>
<evidence type="ECO:0000305" key="2"/>
<keyword id="KW-1185">Reference proteome</keyword>
<keyword id="KW-0687">Ribonucleoprotein</keyword>
<keyword id="KW-0689">Ribosomal protein</keyword>
<keyword id="KW-0694">RNA-binding</keyword>
<keyword id="KW-0699">rRNA-binding</keyword>
<gene>
    <name evidence="1" type="primary">rplT</name>
    <name type="ordered locus">SAG1382</name>
</gene>
<comment type="function">
    <text evidence="1">Binds directly to 23S ribosomal RNA and is necessary for the in vitro assembly process of the 50S ribosomal subunit. It is not involved in the protein synthesizing functions of that subunit.</text>
</comment>
<comment type="similarity">
    <text evidence="1">Belongs to the bacterial ribosomal protein bL20 family.</text>
</comment>
<accession>P66111</accession>
<accession>Q8DYU1</accession>
<accession>Q8E4E9</accession>
<name>RL20_STRA5</name>